<protein>
    <recommendedName>
        <fullName evidence="1">6,7-dimethyl-8-ribityllumazine synthase</fullName>
        <shortName evidence="1">DMRL synthase</shortName>
        <shortName evidence="1">LS</shortName>
        <shortName evidence="1">Lumazine synthase</shortName>
        <ecNumber evidence="1">2.5.1.78</ecNumber>
    </recommendedName>
</protein>
<feature type="chain" id="PRO_0000134707" description="6,7-dimethyl-8-ribityllumazine synthase">
    <location>
        <begin position="1"/>
        <end position="190"/>
    </location>
</feature>
<feature type="active site" description="Proton donor" evidence="1">
    <location>
        <position position="93"/>
    </location>
</feature>
<feature type="binding site" evidence="1">
    <location>
        <position position="23"/>
    </location>
    <ligand>
        <name>5-amino-6-(D-ribitylamino)uracil</name>
        <dbReference type="ChEBI" id="CHEBI:15934"/>
    </ligand>
</feature>
<feature type="binding site" evidence="1">
    <location>
        <begin position="61"/>
        <end position="63"/>
    </location>
    <ligand>
        <name>5-amino-6-(D-ribitylamino)uracil</name>
        <dbReference type="ChEBI" id="CHEBI:15934"/>
    </ligand>
</feature>
<feature type="binding site" evidence="1">
    <location>
        <begin position="85"/>
        <end position="87"/>
    </location>
    <ligand>
        <name>5-amino-6-(D-ribitylamino)uracil</name>
        <dbReference type="ChEBI" id="CHEBI:15934"/>
    </ligand>
</feature>
<feature type="binding site" evidence="1">
    <location>
        <begin position="90"/>
        <end position="91"/>
    </location>
    <ligand>
        <name>(2S)-2-hydroxy-3-oxobutyl phosphate</name>
        <dbReference type="ChEBI" id="CHEBI:58830"/>
    </ligand>
</feature>
<feature type="binding site" evidence="1">
    <location>
        <position position="118"/>
    </location>
    <ligand>
        <name>5-amino-6-(D-ribitylamino)uracil</name>
        <dbReference type="ChEBI" id="CHEBI:15934"/>
    </ligand>
</feature>
<feature type="binding site" evidence="1">
    <location>
        <position position="132"/>
    </location>
    <ligand>
        <name>(2S)-2-hydroxy-3-oxobutyl phosphate</name>
        <dbReference type="ChEBI" id="CHEBI:58830"/>
    </ligand>
</feature>
<gene>
    <name evidence="1" type="primary">ribH</name>
    <name type="ordered locus">alr3993</name>
</gene>
<name>RISB_NOSS1</name>
<sequence length="190" mass="20653">MAVFEGTFTQTEPLRLAVVIGRFNDLVTTKLLAGCQDCLKRHGVDPDPHGNQVDYVWVPGSFEVPLVARQLALTHRYDAIICLGAVIRGQTPHFDYVSAEVSKGIAAASFQTGVPVIFGILTVDTMQQALERAGIKANHGWDYAMNALEMASLMRQLRSNVTDSYSQTQSLPAAFPNASIGKLTAESEEV</sequence>
<accession>Q8YQ43</accession>
<keyword id="KW-1185">Reference proteome</keyword>
<keyword id="KW-0686">Riboflavin biosynthesis</keyword>
<keyword id="KW-0808">Transferase</keyword>
<dbReference type="EC" id="2.5.1.78" evidence="1"/>
<dbReference type="EMBL" id="BA000019">
    <property type="protein sequence ID" value="BAB75692.1"/>
    <property type="molecule type" value="Genomic_DNA"/>
</dbReference>
<dbReference type="PIR" id="AB2305">
    <property type="entry name" value="AB2305"/>
</dbReference>
<dbReference type="RefSeq" id="WP_010998133.1">
    <property type="nucleotide sequence ID" value="NZ_RSCN01000023.1"/>
</dbReference>
<dbReference type="SMR" id="Q8YQ43"/>
<dbReference type="STRING" id="103690.gene:10496035"/>
<dbReference type="KEGG" id="ana:alr3993"/>
<dbReference type="eggNOG" id="COG0054">
    <property type="taxonomic scope" value="Bacteria"/>
</dbReference>
<dbReference type="OrthoDB" id="9809709at2"/>
<dbReference type="BRENDA" id="2.5.1.78">
    <property type="organism ID" value="319"/>
</dbReference>
<dbReference type="UniPathway" id="UPA00275">
    <property type="reaction ID" value="UER00404"/>
</dbReference>
<dbReference type="Proteomes" id="UP000002483">
    <property type="component" value="Chromosome"/>
</dbReference>
<dbReference type="GO" id="GO:0005829">
    <property type="term" value="C:cytosol"/>
    <property type="evidence" value="ECO:0007669"/>
    <property type="project" value="TreeGrafter"/>
</dbReference>
<dbReference type="GO" id="GO:0009349">
    <property type="term" value="C:riboflavin synthase complex"/>
    <property type="evidence" value="ECO:0007669"/>
    <property type="project" value="InterPro"/>
</dbReference>
<dbReference type="GO" id="GO:0000906">
    <property type="term" value="F:6,7-dimethyl-8-ribityllumazine synthase activity"/>
    <property type="evidence" value="ECO:0007669"/>
    <property type="project" value="UniProtKB-UniRule"/>
</dbReference>
<dbReference type="GO" id="GO:0009231">
    <property type="term" value="P:riboflavin biosynthetic process"/>
    <property type="evidence" value="ECO:0007669"/>
    <property type="project" value="UniProtKB-UniRule"/>
</dbReference>
<dbReference type="CDD" id="cd09209">
    <property type="entry name" value="Lumazine_synthase-I"/>
    <property type="match status" value="1"/>
</dbReference>
<dbReference type="FunFam" id="3.40.50.960:FF:000001">
    <property type="entry name" value="6,7-dimethyl-8-ribityllumazine synthase"/>
    <property type="match status" value="1"/>
</dbReference>
<dbReference type="Gene3D" id="3.40.50.960">
    <property type="entry name" value="Lumazine/riboflavin synthase"/>
    <property type="match status" value="1"/>
</dbReference>
<dbReference type="HAMAP" id="MF_00178">
    <property type="entry name" value="Lumazine_synth"/>
    <property type="match status" value="1"/>
</dbReference>
<dbReference type="InterPro" id="IPR034964">
    <property type="entry name" value="LS"/>
</dbReference>
<dbReference type="InterPro" id="IPR002180">
    <property type="entry name" value="LS/RS"/>
</dbReference>
<dbReference type="InterPro" id="IPR036467">
    <property type="entry name" value="LS/RS_sf"/>
</dbReference>
<dbReference type="NCBIfam" id="TIGR00114">
    <property type="entry name" value="lumazine-synth"/>
    <property type="match status" value="1"/>
</dbReference>
<dbReference type="PANTHER" id="PTHR21058:SF0">
    <property type="entry name" value="6,7-DIMETHYL-8-RIBITYLLUMAZINE SYNTHASE"/>
    <property type="match status" value="1"/>
</dbReference>
<dbReference type="PANTHER" id="PTHR21058">
    <property type="entry name" value="6,7-DIMETHYL-8-RIBITYLLUMAZINE SYNTHASE DMRL SYNTHASE LUMAZINE SYNTHASE"/>
    <property type="match status" value="1"/>
</dbReference>
<dbReference type="Pfam" id="PF00885">
    <property type="entry name" value="DMRL_synthase"/>
    <property type="match status" value="1"/>
</dbReference>
<dbReference type="SUPFAM" id="SSF52121">
    <property type="entry name" value="Lumazine synthase"/>
    <property type="match status" value="1"/>
</dbReference>
<proteinExistence type="inferred from homology"/>
<evidence type="ECO:0000255" key="1">
    <source>
        <dbReference type="HAMAP-Rule" id="MF_00178"/>
    </source>
</evidence>
<reference key="1">
    <citation type="journal article" date="2001" name="DNA Res.">
        <title>Complete genomic sequence of the filamentous nitrogen-fixing cyanobacterium Anabaena sp. strain PCC 7120.</title>
        <authorList>
            <person name="Kaneko T."/>
            <person name="Nakamura Y."/>
            <person name="Wolk C.P."/>
            <person name="Kuritz T."/>
            <person name="Sasamoto S."/>
            <person name="Watanabe A."/>
            <person name="Iriguchi M."/>
            <person name="Ishikawa A."/>
            <person name="Kawashima K."/>
            <person name="Kimura T."/>
            <person name="Kishida Y."/>
            <person name="Kohara M."/>
            <person name="Matsumoto M."/>
            <person name="Matsuno A."/>
            <person name="Muraki A."/>
            <person name="Nakazaki N."/>
            <person name="Shimpo S."/>
            <person name="Sugimoto M."/>
            <person name="Takazawa M."/>
            <person name="Yamada M."/>
            <person name="Yasuda M."/>
            <person name="Tabata S."/>
        </authorList>
    </citation>
    <scope>NUCLEOTIDE SEQUENCE [LARGE SCALE GENOMIC DNA]</scope>
    <source>
        <strain>PCC 7120 / SAG 25.82 / UTEX 2576</strain>
    </source>
</reference>
<comment type="function">
    <text evidence="1">Catalyzes the formation of 6,7-dimethyl-8-ribityllumazine by condensation of 5-amino-6-(D-ribitylamino)uracil with 3,4-dihydroxy-2-butanone 4-phosphate. This is the penultimate step in the biosynthesis of riboflavin.</text>
</comment>
<comment type="catalytic activity">
    <reaction evidence="1">
        <text>(2S)-2-hydroxy-3-oxobutyl phosphate + 5-amino-6-(D-ribitylamino)uracil = 6,7-dimethyl-8-(1-D-ribityl)lumazine + phosphate + 2 H2O + H(+)</text>
        <dbReference type="Rhea" id="RHEA:26152"/>
        <dbReference type="ChEBI" id="CHEBI:15377"/>
        <dbReference type="ChEBI" id="CHEBI:15378"/>
        <dbReference type="ChEBI" id="CHEBI:15934"/>
        <dbReference type="ChEBI" id="CHEBI:43474"/>
        <dbReference type="ChEBI" id="CHEBI:58201"/>
        <dbReference type="ChEBI" id="CHEBI:58830"/>
        <dbReference type="EC" id="2.5.1.78"/>
    </reaction>
</comment>
<comment type="pathway">
    <text evidence="1">Cofactor biosynthesis; riboflavin biosynthesis; riboflavin from 2-hydroxy-3-oxobutyl phosphate and 5-amino-6-(D-ribitylamino)uracil: step 1/2.</text>
</comment>
<comment type="similarity">
    <text evidence="1">Belongs to the DMRL synthase family.</text>
</comment>
<organism>
    <name type="scientific">Nostoc sp. (strain PCC 7120 / SAG 25.82 / UTEX 2576)</name>
    <dbReference type="NCBI Taxonomy" id="103690"/>
    <lineage>
        <taxon>Bacteria</taxon>
        <taxon>Bacillati</taxon>
        <taxon>Cyanobacteriota</taxon>
        <taxon>Cyanophyceae</taxon>
        <taxon>Nostocales</taxon>
        <taxon>Nostocaceae</taxon>
        <taxon>Nostoc</taxon>
    </lineage>
</organism>